<reference key="1">
    <citation type="journal article" date="2011" name="J. Bacteriol.">
        <title>Genome of Ochrobactrum anthropi ATCC 49188 T, a versatile opportunistic pathogen and symbiont of several eukaryotic hosts.</title>
        <authorList>
            <person name="Chain P.S."/>
            <person name="Lang D.M."/>
            <person name="Comerci D.J."/>
            <person name="Malfatti S.A."/>
            <person name="Vergez L.M."/>
            <person name="Shin M."/>
            <person name="Ugalde R.A."/>
            <person name="Garcia E."/>
            <person name="Tolmasky M.E."/>
        </authorList>
    </citation>
    <scope>NUCLEOTIDE SEQUENCE [LARGE SCALE GENOMIC DNA]</scope>
    <source>
        <strain>ATCC 49188 / DSM 6882 / CCUG 24695 / JCM 21032 / LMG 3331 / NBRC 15819 / NCTC 12168 / Alc 37</strain>
    </source>
</reference>
<proteinExistence type="inferred from homology"/>
<comment type="function">
    <text evidence="1">Catalyzes the conversion of uracil and 5-phospho-alpha-D-ribose 1-diphosphate (PRPP) to UMP and diphosphate.</text>
</comment>
<comment type="catalytic activity">
    <reaction evidence="1">
        <text>UMP + diphosphate = 5-phospho-alpha-D-ribose 1-diphosphate + uracil</text>
        <dbReference type="Rhea" id="RHEA:13017"/>
        <dbReference type="ChEBI" id="CHEBI:17568"/>
        <dbReference type="ChEBI" id="CHEBI:33019"/>
        <dbReference type="ChEBI" id="CHEBI:57865"/>
        <dbReference type="ChEBI" id="CHEBI:58017"/>
        <dbReference type="EC" id="2.4.2.9"/>
    </reaction>
</comment>
<comment type="cofactor">
    <cofactor evidence="1">
        <name>Mg(2+)</name>
        <dbReference type="ChEBI" id="CHEBI:18420"/>
    </cofactor>
    <text evidence="1">Binds 1 Mg(2+) ion per subunit. The magnesium is bound as Mg-PRPP.</text>
</comment>
<comment type="activity regulation">
    <text evidence="1">Allosterically activated by GTP.</text>
</comment>
<comment type="pathway">
    <text evidence="1">Pyrimidine metabolism; UMP biosynthesis via salvage pathway; UMP from uracil: step 1/1.</text>
</comment>
<comment type="similarity">
    <text evidence="1">Belongs to the UPRTase family.</text>
</comment>
<organism>
    <name type="scientific">Brucella anthropi (strain ATCC 49188 / DSM 6882 / CCUG 24695 / JCM 21032 / LMG 3331 / NBRC 15819 / NCTC 12168 / Alc 37)</name>
    <name type="common">Ochrobactrum anthropi</name>
    <dbReference type="NCBI Taxonomy" id="439375"/>
    <lineage>
        <taxon>Bacteria</taxon>
        <taxon>Pseudomonadati</taxon>
        <taxon>Pseudomonadota</taxon>
        <taxon>Alphaproteobacteria</taxon>
        <taxon>Hyphomicrobiales</taxon>
        <taxon>Brucellaceae</taxon>
        <taxon>Brucella/Ochrobactrum group</taxon>
        <taxon>Brucella</taxon>
    </lineage>
</organism>
<name>UPP_BRUA4</name>
<feature type="chain" id="PRO_1000053751" description="Uracil phosphoribosyltransferase">
    <location>
        <begin position="1"/>
        <end position="208"/>
    </location>
</feature>
<feature type="binding site" evidence="1">
    <location>
        <position position="78"/>
    </location>
    <ligand>
        <name>5-phospho-alpha-D-ribose 1-diphosphate</name>
        <dbReference type="ChEBI" id="CHEBI:58017"/>
    </ligand>
</feature>
<feature type="binding site" evidence="1">
    <location>
        <position position="103"/>
    </location>
    <ligand>
        <name>5-phospho-alpha-D-ribose 1-diphosphate</name>
        <dbReference type="ChEBI" id="CHEBI:58017"/>
    </ligand>
</feature>
<feature type="binding site" evidence="1">
    <location>
        <begin position="130"/>
        <end position="138"/>
    </location>
    <ligand>
        <name>5-phospho-alpha-D-ribose 1-diphosphate</name>
        <dbReference type="ChEBI" id="CHEBI:58017"/>
    </ligand>
</feature>
<feature type="binding site" evidence="1">
    <location>
        <position position="193"/>
    </location>
    <ligand>
        <name>uracil</name>
        <dbReference type="ChEBI" id="CHEBI:17568"/>
    </ligand>
</feature>
<feature type="binding site" evidence="1">
    <location>
        <begin position="198"/>
        <end position="200"/>
    </location>
    <ligand>
        <name>uracil</name>
        <dbReference type="ChEBI" id="CHEBI:17568"/>
    </ligand>
</feature>
<feature type="binding site" evidence="1">
    <location>
        <position position="199"/>
    </location>
    <ligand>
        <name>5-phospho-alpha-D-ribose 1-diphosphate</name>
        <dbReference type="ChEBI" id="CHEBI:58017"/>
    </ligand>
</feature>
<gene>
    <name evidence="1" type="primary">upp</name>
    <name type="ordered locus">Oant_1316</name>
</gene>
<evidence type="ECO:0000255" key="1">
    <source>
        <dbReference type="HAMAP-Rule" id="MF_01218"/>
    </source>
</evidence>
<keyword id="KW-0021">Allosteric enzyme</keyword>
<keyword id="KW-0328">Glycosyltransferase</keyword>
<keyword id="KW-0342">GTP-binding</keyword>
<keyword id="KW-0460">Magnesium</keyword>
<keyword id="KW-0547">Nucleotide-binding</keyword>
<keyword id="KW-1185">Reference proteome</keyword>
<keyword id="KW-0808">Transferase</keyword>
<dbReference type="EC" id="2.4.2.9" evidence="1"/>
<dbReference type="EMBL" id="CP000758">
    <property type="protein sequence ID" value="ABS14033.1"/>
    <property type="molecule type" value="Genomic_DNA"/>
</dbReference>
<dbReference type="SMR" id="A6WYH9"/>
<dbReference type="STRING" id="439375.Oant_1316"/>
<dbReference type="KEGG" id="oan:Oant_1316"/>
<dbReference type="eggNOG" id="COG0035">
    <property type="taxonomic scope" value="Bacteria"/>
</dbReference>
<dbReference type="HOGENOM" id="CLU_067096_2_2_5"/>
<dbReference type="PhylomeDB" id="A6WYH9"/>
<dbReference type="UniPathway" id="UPA00574">
    <property type="reaction ID" value="UER00636"/>
</dbReference>
<dbReference type="Proteomes" id="UP000002301">
    <property type="component" value="Chromosome 1"/>
</dbReference>
<dbReference type="GO" id="GO:0005525">
    <property type="term" value="F:GTP binding"/>
    <property type="evidence" value="ECO:0007669"/>
    <property type="project" value="UniProtKB-KW"/>
</dbReference>
<dbReference type="GO" id="GO:0000287">
    <property type="term" value="F:magnesium ion binding"/>
    <property type="evidence" value="ECO:0007669"/>
    <property type="project" value="UniProtKB-UniRule"/>
</dbReference>
<dbReference type="GO" id="GO:0004845">
    <property type="term" value="F:uracil phosphoribosyltransferase activity"/>
    <property type="evidence" value="ECO:0007669"/>
    <property type="project" value="UniProtKB-UniRule"/>
</dbReference>
<dbReference type="GO" id="GO:0044206">
    <property type="term" value="P:UMP salvage"/>
    <property type="evidence" value="ECO:0007669"/>
    <property type="project" value="UniProtKB-UniRule"/>
</dbReference>
<dbReference type="GO" id="GO:0006223">
    <property type="term" value="P:uracil salvage"/>
    <property type="evidence" value="ECO:0007669"/>
    <property type="project" value="InterPro"/>
</dbReference>
<dbReference type="CDD" id="cd06223">
    <property type="entry name" value="PRTases_typeI"/>
    <property type="match status" value="1"/>
</dbReference>
<dbReference type="FunFam" id="3.40.50.2020:FF:000003">
    <property type="entry name" value="Uracil phosphoribosyltransferase"/>
    <property type="match status" value="1"/>
</dbReference>
<dbReference type="Gene3D" id="3.40.50.2020">
    <property type="match status" value="1"/>
</dbReference>
<dbReference type="HAMAP" id="MF_01218_B">
    <property type="entry name" value="Upp_B"/>
    <property type="match status" value="1"/>
</dbReference>
<dbReference type="InterPro" id="IPR000836">
    <property type="entry name" value="PRibTrfase_dom"/>
</dbReference>
<dbReference type="InterPro" id="IPR029057">
    <property type="entry name" value="PRTase-like"/>
</dbReference>
<dbReference type="InterPro" id="IPR034332">
    <property type="entry name" value="Upp_B"/>
</dbReference>
<dbReference type="InterPro" id="IPR050054">
    <property type="entry name" value="UPRTase/APRTase"/>
</dbReference>
<dbReference type="InterPro" id="IPR005765">
    <property type="entry name" value="Ura_phspho_trans"/>
</dbReference>
<dbReference type="NCBIfam" id="NF001097">
    <property type="entry name" value="PRK00129.1"/>
    <property type="match status" value="1"/>
</dbReference>
<dbReference type="NCBIfam" id="TIGR01091">
    <property type="entry name" value="upp"/>
    <property type="match status" value="1"/>
</dbReference>
<dbReference type="PANTHER" id="PTHR32315">
    <property type="entry name" value="ADENINE PHOSPHORIBOSYLTRANSFERASE"/>
    <property type="match status" value="1"/>
</dbReference>
<dbReference type="PANTHER" id="PTHR32315:SF4">
    <property type="entry name" value="URACIL PHOSPHORIBOSYLTRANSFERASE, CHLOROPLASTIC"/>
    <property type="match status" value="1"/>
</dbReference>
<dbReference type="Pfam" id="PF14681">
    <property type="entry name" value="UPRTase"/>
    <property type="match status" value="1"/>
</dbReference>
<dbReference type="SUPFAM" id="SSF53271">
    <property type="entry name" value="PRTase-like"/>
    <property type="match status" value="1"/>
</dbReference>
<sequence length="208" mass="23039">MGVTVVSHPLVQHKLTIMRKKETSTASFRRLLKEISLLLCYEVTRDLELTTMPIETPLMPMDAPVLEGKKLVFASILRAGNGLLEGMLDLVPAARVAHIGLYRDHDTLQPVEYYFKAPEDIVNRLIIVVDPMLATGHSAIAAIDKLKERGATNIRFLCLLAAPEGIKRFTEAHPDVDVFTASIDERLDEKGYIVPGLGDAGDRMYGTK</sequence>
<accession>A6WYH9</accession>
<protein>
    <recommendedName>
        <fullName evidence="1">Uracil phosphoribosyltransferase</fullName>
        <ecNumber evidence="1">2.4.2.9</ecNumber>
    </recommendedName>
    <alternativeName>
        <fullName evidence="1">UMP pyrophosphorylase</fullName>
    </alternativeName>
    <alternativeName>
        <fullName evidence="1">UPRTase</fullName>
    </alternativeName>
</protein>